<accession>Q54P69</accession>
<reference key="1">
    <citation type="journal article" date="2005" name="Nature">
        <title>The genome of the social amoeba Dictyostelium discoideum.</title>
        <authorList>
            <person name="Eichinger L."/>
            <person name="Pachebat J.A."/>
            <person name="Gloeckner G."/>
            <person name="Rajandream M.A."/>
            <person name="Sucgang R."/>
            <person name="Berriman M."/>
            <person name="Song J."/>
            <person name="Olsen R."/>
            <person name="Szafranski K."/>
            <person name="Xu Q."/>
            <person name="Tunggal B."/>
            <person name="Kummerfeld S."/>
            <person name="Madera M."/>
            <person name="Konfortov B.A."/>
            <person name="Rivero F."/>
            <person name="Bankier A.T."/>
            <person name="Lehmann R."/>
            <person name="Hamlin N."/>
            <person name="Davies R."/>
            <person name="Gaudet P."/>
            <person name="Fey P."/>
            <person name="Pilcher K."/>
            <person name="Chen G."/>
            <person name="Saunders D."/>
            <person name="Sodergren E.J."/>
            <person name="Davis P."/>
            <person name="Kerhornou A."/>
            <person name="Nie X."/>
            <person name="Hall N."/>
            <person name="Anjard C."/>
            <person name="Hemphill L."/>
            <person name="Bason N."/>
            <person name="Farbrother P."/>
            <person name="Desany B."/>
            <person name="Just E."/>
            <person name="Morio T."/>
            <person name="Rost R."/>
            <person name="Churcher C.M."/>
            <person name="Cooper J."/>
            <person name="Haydock S."/>
            <person name="van Driessche N."/>
            <person name="Cronin A."/>
            <person name="Goodhead I."/>
            <person name="Muzny D.M."/>
            <person name="Mourier T."/>
            <person name="Pain A."/>
            <person name="Lu M."/>
            <person name="Harper D."/>
            <person name="Lindsay R."/>
            <person name="Hauser H."/>
            <person name="James K.D."/>
            <person name="Quiles M."/>
            <person name="Madan Babu M."/>
            <person name="Saito T."/>
            <person name="Buchrieser C."/>
            <person name="Wardroper A."/>
            <person name="Felder M."/>
            <person name="Thangavelu M."/>
            <person name="Johnson D."/>
            <person name="Knights A."/>
            <person name="Loulseged H."/>
            <person name="Mungall K.L."/>
            <person name="Oliver K."/>
            <person name="Price C."/>
            <person name="Quail M.A."/>
            <person name="Urushihara H."/>
            <person name="Hernandez J."/>
            <person name="Rabbinowitsch E."/>
            <person name="Steffen D."/>
            <person name="Sanders M."/>
            <person name="Ma J."/>
            <person name="Kohara Y."/>
            <person name="Sharp S."/>
            <person name="Simmonds M.N."/>
            <person name="Spiegler S."/>
            <person name="Tivey A."/>
            <person name="Sugano S."/>
            <person name="White B."/>
            <person name="Walker D."/>
            <person name="Woodward J.R."/>
            <person name="Winckler T."/>
            <person name="Tanaka Y."/>
            <person name="Shaulsky G."/>
            <person name="Schleicher M."/>
            <person name="Weinstock G.M."/>
            <person name="Rosenthal A."/>
            <person name="Cox E.C."/>
            <person name="Chisholm R.L."/>
            <person name="Gibbs R.A."/>
            <person name="Loomis W.F."/>
            <person name="Platzer M."/>
            <person name="Kay R.R."/>
            <person name="Williams J.G."/>
            <person name="Dear P.H."/>
            <person name="Noegel A.A."/>
            <person name="Barrell B.G."/>
            <person name="Kuspa A."/>
        </authorList>
    </citation>
    <scope>NUCLEOTIDE SEQUENCE [LARGE SCALE GENOMIC DNA]</scope>
    <source>
        <strain>AX4</strain>
    </source>
</reference>
<dbReference type="EMBL" id="AAFI02000071">
    <property type="protein sequence ID" value="EAL65032.1"/>
    <property type="molecule type" value="Genomic_DNA"/>
</dbReference>
<dbReference type="RefSeq" id="XP_638389.1">
    <property type="nucleotide sequence ID" value="XM_633297.1"/>
</dbReference>
<dbReference type="FunCoup" id="Q54P69">
    <property type="interactions" value="13"/>
</dbReference>
<dbReference type="GlyCosmos" id="Q54P69">
    <property type="glycosylation" value="11 sites, No reported glycans"/>
</dbReference>
<dbReference type="GlyGen" id="Q54P69">
    <property type="glycosylation" value="11 sites"/>
</dbReference>
<dbReference type="PaxDb" id="44689-DDB0231729"/>
<dbReference type="EnsemblProtists" id="EAL65032">
    <property type="protein sequence ID" value="EAL65032"/>
    <property type="gene ID" value="DDB_G0284759"/>
</dbReference>
<dbReference type="GeneID" id="8624758"/>
<dbReference type="KEGG" id="ddi:DDB_G0284759"/>
<dbReference type="dictyBase" id="DDB_G0284759">
    <property type="gene designation" value="psiM"/>
</dbReference>
<dbReference type="VEuPathDB" id="AmoebaDB:DDB_G0284759"/>
<dbReference type="HOGENOM" id="CLU_024170_0_0_1"/>
<dbReference type="InParanoid" id="Q54P69"/>
<dbReference type="PhylomeDB" id="Q54P69"/>
<dbReference type="PRO" id="PR:Q54P69"/>
<dbReference type="Proteomes" id="UP000002195">
    <property type="component" value="Chromosome 4"/>
</dbReference>
<dbReference type="GO" id="GO:0031012">
    <property type="term" value="C:extracellular matrix"/>
    <property type="evidence" value="ECO:0007005"/>
    <property type="project" value="dictyBase"/>
</dbReference>
<dbReference type="GO" id="GO:0005576">
    <property type="term" value="C:extracellular region"/>
    <property type="evidence" value="ECO:0000318"/>
    <property type="project" value="GO_Central"/>
</dbReference>
<dbReference type="GO" id="GO:0016020">
    <property type="term" value="C:membrane"/>
    <property type="evidence" value="ECO:0007669"/>
    <property type="project" value="UniProtKB-SubCell"/>
</dbReference>
<dbReference type="GO" id="GO:0019953">
    <property type="term" value="P:sexual reproduction"/>
    <property type="evidence" value="ECO:0000270"/>
    <property type="project" value="dictyBase"/>
</dbReference>
<dbReference type="InterPro" id="IPR011874">
    <property type="entry name" value="Fibro_Slime"/>
</dbReference>
<dbReference type="InterPro" id="IPR037524">
    <property type="entry name" value="PA14/GLEYA"/>
</dbReference>
<dbReference type="InterPro" id="IPR011658">
    <property type="entry name" value="PA14_dom"/>
</dbReference>
<dbReference type="InterPro" id="IPR051154">
    <property type="entry name" value="Prespore-cell_inducing_factor"/>
</dbReference>
<dbReference type="NCBIfam" id="TIGR02148">
    <property type="entry name" value="Fibro_Slime"/>
    <property type="match status" value="1"/>
</dbReference>
<dbReference type="PANTHER" id="PTHR31137:SF29">
    <property type="entry name" value="PROTEIN PSIA-RELATED"/>
    <property type="match status" value="1"/>
</dbReference>
<dbReference type="PANTHER" id="PTHR31137">
    <property type="entry name" value="PROTEIN PSIB-RELATED-RELATED"/>
    <property type="match status" value="1"/>
</dbReference>
<dbReference type="Pfam" id="PF07691">
    <property type="entry name" value="PA14"/>
    <property type="match status" value="1"/>
</dbReference>
<dbReference type="PROSITE" id="PS51820">
    <property type="entry name" value="PA14"/>
    <property type="match status" value="1"/>
</dbReference>
<protein>
    <recommendedName>
        <fullName>Protein psiM</fullName>
    </recommendedName>
</protein>
<sequence>MKKINNNKIFVLFLTILLYLLNITTAQKPVSINIKIFDQLPLYNDNFGSQSRAATIKSMVATSLNTTFKTPSLGSATSSLPSPQLFQYWFQSNFANETKNSGLNAPLTRTITLNYDSDSGNYIFNNPNFFLIDTDGFDKTASNRIYKDSTGTYHNYHYCVAFNYVFKPDGQGKEMFKFTGNDDVWVFVNNKLLLDGGGVRSPEATTVDFTKAGLVKSQETPLDFFYCERSTNSPPSFKIETNLGGLYCKAYDYCGVCNGDGGTCCNPQTDCLTQLENGTLINDKCTIPICPPLDTQIDKNLGIGFFCQHSQIPDPYAGSLCEKGECDSLTGIWTRNTSICPTDKDLAPQCRKQATCDPKLGCQSTYLCNNVCDIGTCNNGTCTQKTSNDCVQELDRGVEDKCFTYKCVPNVGCSKTPICPRGTDPCKNYTCSGGICGTVDIPQSECSCPCPGLNKCNTRICNPDNTCTLFNLTEINDGNPCTDDLCDPVTGDITHVMTTRCSGCNTCDVKTGKCVAQDSHCDDGNPCTDNACVASANSTANSQVGQCTQTPTAKCDLGDKCMVYSCTLEGGCNATQRVCPNSGACKIGYCEPGFGCKLKDRVCSSDWYCIEAQCDAKYGCIQFDRRCAPDNSKCQEGVCVNNTAIGKNDGKCISEDYDPKPFVCQKAALVSTAVIASVVVVGAVVLGAAIFAGKKGYDAWKTSQGNVMAASQANPLYTQSSNGGENPLYNSPT</sequence>
<feature type="signal peptide" evidence="1">
    <location>
        <begin position="1"/>
        <end position="26"/>
    </location>
</feature>
<feature type="chain" id="PRO_0000327549" description="Protein psiM">
    <location>
        <begin position="27"/>
        <end position="733"/>
    </location>
</feature>
<feature type="topological domain" description="Extracellular" evidence="1">
    <location>
        <begin position="27"/>
        <end position="672"/>
    </location>
</feature>
<feature type="transmembrane region" description="Helical" evidence="1">
    <location>
        <begin position="673"/>
        <end position="693"/>
    </location>
</feature>
<feature type="topological domain" description="Cytoplasmic" evidence="1">
    <location>
        <begin position="694"/>
        <end position="733"/>
    </location>
</feature>
<feature type="domain" description="PA14" evidence="2">
    <location>
        <begin position="114"/>
        <end position="260"/>
    </location>
</feature>
<feature type="glycosylation site" description="N-linked (GlcNAc...) asparagine" evidence="1">
    <location>
        <position position="22"/>
    </location>
</feature>
<feature type="glycosylation site" description="N-linked (GlcNAc...) asparagine" evidence="1">
    <location>
        <position position="65"/>
    </location>
</feature>
<feature type="glycosylation site" description="N-linked (GlcNAc...) asparagine" evidence="1">
    <location>
        <position position="96"/>
    </location>
</feature>
<feature type="glycosylation site" description="N-linked (GlcNAc...) asparagine" evidence="1">
    <location>
        <position position="277"/>
    </location>
</feature>
<feature type="glycosylation site" description="N-linked (GlcNAc...) asparagine" evidence="1">
    <location>
        <position position="336"/>
    </location>
</feature>
<feature type="glycosylation site" description="N-linked (GlcNAc...) asparagine" evidence="1">
    <location>
        <position position="379"/>
    </location>
</feature>
<feature type="glycosylation site" description="N-linked (GlcNAc...) asparagine" evidence="1">
    <location>
        <position position="428"/>
    </location>
</feature>
<feature type="glycosylation site" description="N-linked (GlcNAc...) asparagine" evidence="1">
    <location>
        <position position="471"/>
    </location>
</feature>
<feature type="glycosylation site" description="N-linked (GlcNAc...) asparagine" evidence="1">
    <location>
        <position position="537"/>
    </location>
</feature>
<feature type="glycosylation site" description="N-linked (GlcNAc...) asparagine" evidence="1">
    <location>
        <position position="573"/>
    </location>
</feature>
<feature type="glycosylation site" description="N-linked (GlcNAc...) asparagine" evidence="1">
    <location>
        <position position="641"/>
    </location>
</feature>
<keyword id="KW-0325">Glycoprotein</keyword>
<keyword id="KW-0472">Membrane</keyword>
<keyword id="KW-1185">Reference proteome</keyword>
<keyword id="KW-0732">Signal</keyword>
<keyword id="KW-0812">Transmembrane</keyword>
<keyword id="KW-1133">Transmembrane helix</keyword>
<organism>
    <name type="scientific">Dictyostelium discoideum</name>
    <name type="common">Social amoeba</name>
    <dbReference type="NCBI Taxonomy" id="44689"/>
    <lineage>
        <taxon>Eukaryota</taxon>
        <taxon>Amoebozoa</taxon>
        <taxon>Evosea</taxon>
        <taxon>Eumycetozoa</taxon>
        <taxon>Dictyostelia</taxon>
        <taxon>Dictyosteliales</taxon>
        <taxon>Dictyosteliaceae</taxon>
        <taxon>Dictyostelium</taxon>
    </lineage>
</organism>
<gene>
    <name type="primary">psiM</name>
    <name type="ORF">DDB_G0284759</name>
</gene>
<proteinExistence type="inferred from homology"/>
<comment type="subcellular location">
    <subcellularLocation>
        <location evidence="3">Membrane</location>
        <topology evidence="3">Single-pass type I membrane protein</topology>
    </subcellularLocation>
</comment>
<comment type="similarity">
    <text evidence="3">Belongs to the prespore-cell-inducing factor family.</text>
</comment>
<evidence type="ECO:0000255" key="1"/>
<evidence type="ECO:0000255" key="2">
    <source>
        <dbReference type="PROSITE-ProRule" id="PRU01164"/>
    </source>
</evidence>
<evidence type="ECO:0000305" key="3"/>
<name>PSIM_DICDI</name>